<accession>Q3Z5V9</accession>
<protein>
    <recommendedName>
        <fullName evidence="1">Protein ApaG</fullName>
    </recommendedName>
</protein>
<name>APAG_SHISS</name>
<proteinExistence type="inferred from homology"/>
<dbReference type="EMBL" id="CP000038">
    <property type="protein sequence ID" value="AAZ86853.1"/>
    <property type="molecule type" value="Genomic_DNA"/>
</dbReference>
<dbReference type="RefSeq" id="WP_000610901.1">
    <property type="nucleotide sequence ID" value="NC_007384.1"/>
</dbReference>
<dbReference type="SMR" id="Q3Z5V9"/>
<dbReference type="GeneID" id="93777385"/>
<dbReference type="KEGG" id="ssn:SSON_0058"/>
<dbReference type="HOGENOM" id="CLU_128074_0_0_6"/>
<dbReference type="Proteomes" id="UP000002529">
    <property type="component" value="Chromosome"/>
</dbReference>
<dbReference type="GO" id="GO:0070987">
    <property type="term" value="P:error-free translesion synthesis"/>
    <property type="evidence" value="ECO:0007669"/>
    <property type="project" value="TreeGrafter"/>
</dbReference>
<dbReference type="Gene3D" id="2.60.40.1470">
    <property type="entry name" value="ApaG domain"/>
    <property type="match status" value="1"/>
</dbReference>
<dbReference type="HAMAP" id="MF_00791">
    <property type="entry name" value="ApaG"/>
    <property type="match status" value="1"/>
</dbReference>
<dbReference type="InterPro" id="IPR007474">
    <property type="entry name" value="ApaG_domain"/>
</dbReference>
<dbReference type="InterPro" id="IPR036767">
    <property type="entry name" value="ApaG_sf"/>
</dbReference>
<dbReference type="InterPro" id="IPR023065">
    <property type="entry name" value="Uncharacterised_ApaG"/>
</dbReference>
<dbReference type="NCBIfam" id="NF003967">
    <property type="entry name" value="PRK05461.1"/>
    <property type="match status" value="1"/>
</dbReference>
<dbReference type="PANTHER" id="PTHR14289">
    <property type="entry name" value="F-BOX ONLY PROTEIN 3"/>
    <property type="match status" value="1"/>
</dbReference>
<dbReference type="PANTHER" id="PTHR14289:SF16">
    <property type="entry name" value="POLYMERASE DELTA-INTERACTING PROTEIN 2"/>
    <property type="match status" value="1"/>
</dbReference>
<dbReference type="Pfam" id="PF04379">
    <property type="entry name" value="DUF525"/>
    <property type="match status" value="1"/>
</dbReference>
<dbReference type="SUPFAM" id="SSF110069">
    <property type="entry name" value="ApaG-like"/>
    <property type="match status" value="1"/>
</dbReference>
<dbReference type="PROSITE" id="PS51087">
    <property type="entry name" value="APAG"/>
    <property type="match status" value="1"/>
</dbReference>
<gene>
    <name evidence="1" type="primary">apaG</name>
    <name type="ordered locus">SSON_0058</name>
</gene>
<keyword id="KW-1185">Reference proteome</keyword>
<organism>
    <name type="scientific">Shigella sonnei (strain Ss046)</name>
    <dbReference type="NCBI Taxonomy" id="300269"/>
    <lineage>
        <taxon>Bacteria</taxon>
        <taxon>Pseudomonadati</taxon>
        <taxon>Pseudomonadota</taxon>
        <taxon>Gammaproteobacteria</taxon>
        <taxon>Enterobacterales</taxon>
        <taxon>Enterobacteriaceae</taxon>
        <taxon>Shigella</taxon>
    </lineage>
</organism>
<sequence length="125" mass="13867">MINSPRVCIQVQSVYIEAQSSPDNERYVFAYTVTIRNLGRAPVQLLGRYWLITNGNGRETEVQGEGVVGVQPLIAPGEEYQYTSGAIIETPLGTMQGHYEMIDENGVPFSIDIPVFRLAVPTLIH</sequence>
<feature type="chain" id="PRO_1000083662" description="Protein ApaG">
    <location>
        <begin position="1"/>
        <end position="125"/>
    </location>
</feature>
<feature type="domain" description="ApaG" evidence="1">
    <location>
        <begin position="1"/>
        <end position="125"/>
    </location>
</feature>
<reference key="1">
    <citation type="journal article" date="2005" name="Nucleic Acids Res.">
        <title>Genome dynamics and diversity of Shigella species, the etiologic agents of bacillary dysentery.</title>
        <authorList>
            <person name="Yang F."/>
            <person name="Yang J."/>
            <person name="Zhang X."/>
            <person name="Chen L."/>
            <person name="Jiang Y."/>
            <person name="Yan Y."/>
            <person name="Tang X."/>
            <person name="Wang J."/>
            <person name="Xiong Z."/>
            <person name="Dong J."/>
            <person name="Xue Y."/>
            <person name="Zhu Y."/>
            <person name="Xu X."/>
            <person name="Sun L."/>
            <person name="Chen S."/>
            <person name="Nie H."/>
            <person name="Peng J."/>
            <person name="Xu J."/>
            <person name="Wang Y."/>
            <person name="Yuan Z."/>
            <person name="Wen Y."/>
            <person name="Yao Z."/>
            <person name="Shen Y."/>
            <person name="Qiang B."/>
            <person name="Hou Y."/>
            <person name="Yu J."/>
            <person name="Jin Q."/>
        </authorList>
    </citation>
    <scope>NUCLEOTIDE SEQUENCE [LARGE SCALE GENOMIC DNA]</scope>
    <source>
        <strain>Ss046</strain>
    </source>
</reference>
<evidence type="ECO:0000255" key="1">
    <source>
        <dbReference type="HAMAP-Rule" id="MF_00791"/>
    </source>
</evidence>